<accession>Q14JB3</accession>
<keyword id="KW-0687">Ribonucleoprotein</keyword>
<keyword id="KW-0689">Ribosomal protein</keyword>
<keyword id="KW-0694">RNA-binding</keyword>
<keyword id="KW-0699">rRNA-binding</keyword>
<keyword id="KW-0820">tRNA-binding</keyword>
<proteinExistence type="inferred from homology"/>
<comment type="function">
    <text evidence="1">Binds 23S rRNA and is also seen to make contacts with the A and possibly P site tRNAs.</text>
</comment>
<comment type="subunit">
    <text evidence="1">Part of the 50S ribosomal subunit.</text>
</comment>
<comment type="similarity">
    <text evidence="1">Belongs to the universal ribosomal protein uL16 family.</text>
</comment>
<dbReference type="EMBL" id="AM286280">
    <property type="protein sequence ID" value="CAL08348.1"/>
    <property type="molecule type" value="Genomic_DNA"/>
</dbReference>
<dbReference type="RefSeq" id="WP_003027191.1">
    <property type="nucleotide sequence ID" value="NC_008245.1"/>
</dbReference>
<dbReference type="SMR" id="Q14JB3"/>
<dbReference type="GeneID" id="75264254"/>
<dbReference type="KEGG" id="ftf:FTF0332"/>
<dbReference type="HOGENOM" id="CLU_078858_2_1_6"/>
<dbReference type="GO" id="GO:0022625">
    <property type="term" value="C:cytosolic large ribosomal subunit"/>
    <property type="evidence" value="ECO:0007669"/>
    <property type="project" value="TreeGrafter"/>
</dbReference>
<dbReference type="GO" id="GO:0019843">
    <property type="term" value="F:rRNA binding"/>
    <property type="evidence" value="ECO:0007669"/>
    <property type="project" value="UniProtKB-UniRule"/>
</dbReference>
<dbReference type="GO" id="GO:0003735">
    <property type="term" value="F:structural constituent of ribosome"/>
    <property type="evidence" value="ECO:0007669"/>
    <property type="project" value="InterPro"/>
</dbReference>
<dbReference type="GO" id="GO:0000049">
    <property type="term" value="F:tRNA binding"/>
    <property type="evidence" value="ECO:0007669"/>
    <property type="project" value="UniProtKB-KW"/>
</dbReference>
<dbReference type="GO" id="GO:0006412">
    <property type="term" value="P:translation"/>
    <property type="evidence" value="ECO:0007669"/>
    <property type="project" value="UniProtKB-UniRule"/>
</dbReference>
<dbReference type="CDD" id="cd01433">
    <property type="entry name" value="Ribosomal_L16_L10e"/>
    <property type="match status" value="1"/>
</dbReference>
<dbReference type="FunFam" id="3.90.1170.10:FF:000001">
    <property type="entry name" value="50S ribosomal protein L16"/>
    <property type="match status" value="1"/>
</dbReference>
<dbReference type="Gene3D" id="3.90.1170.10">
    <property type="entry name" value="Ribosomal protein L10e/L16"/>
    <property type="match status" value="1"/>
</dbReference>
<dbReference type="HAMAP" id="MF_01342">
    <property type="entry name" value="Ribosomal_uL16"/>
    <property type="match status" value="1"/>
</dbReference>
<dbReference type="InterPro" id="IPR047873">
    <property type="entry name" value="Ribosomal_uL16"/>
</dbReference>
<dbReference type="InterPro" id="IPR000114">
    <property type="entry name" value="Ribosomal_uL16_bact-type"/>
</dbReference>
<dbReference type="InterPro" id="IPR020798">
    <property type="entry name" value="Ribosomal_uL16_CS"/>
</dbReference>
<dbReference type="InterPro" id="IPR016180">
    <property type="entry name" value="Ribosomal_uL16_dom"/>
</dbReference>
<dbReference type="InterPro" id="IPR036920">
    <property type="entry name" value="Ribosomal_uL16_sf"/>
</dbReference>
<dbReference type="NCBIfam" id="TIGR01164">
    <property type="entry name" value="rplP_bact"/>
    <property type="match status" value="1"/>
</dbReference>
<dbReference type="PANTHER" id="PTHR12220">
    <property type="entry name" value="50S/60S RIBOSOMAL PROTEIN L16"/>
    <property type="match status" value="1"/>
</dbReference>
<dbReference type="PANTHER" id="PTHR12220:SF13">
    <property type="entry name" value="LARGE RIBOSOMAL SUBUNIT PROTEIN UL16M"/>
    <property type="match status" value="1"/>
</dbReference>
<dbReference type="Pfam" id="PF00252">
    <property type="entry name" value="Ribosomal_L16"/>
    <property type="match status" value="1"/>
</dbReference>
<dbReference type="PRINTS" id="PR00060">
    <property type="entry name" value="RIBOSOMALL16"/>
</dbReference>
<dbReference type="SUPFAM" id="SSF54686">
    <property type="entry name" value="Ribosomal protein L16p/L10e"/>
    <property type="match status" value="1"/>
</dbReference>
<dbReference type="PROSITE" id="PS00586">
    <property type="entry name" value="RIBOSOMAL_L16_1"/>
    <property type="match status" value="1"/>
</dbReference>
<dbReference type="PROSITE" id="PS00701">
    <property type="entry name" value="RIBOSOMAL_L16_2"/>
    <property type="match status" value="1"/>
</dbReference>
<reference key="1">
    <citation type="journal article" date="2007" name="PLoS ONE">
        <title>Genome sequencing shows that European isolates of Francisella tularensis subspecies tularensis are almost identical to US laboratory strain Schu S4.</title>
        <authorList>
            <person name="Chaudhuri R.R."/>
            <person name="Ren C.-P."/>
            <person name="Desmond L."/>
            <person name="Vincent G.A."/>
            <person name="Silman N.J."/>
            <person name="Brehm J.K."/>
            <person name="Elmore M.J."/>
            <person name="Hudson M.J."/>
            <person name="Forsman M."/>
            <person name="Isherwood K.E."/>
            <person name="Gurycova D."/>
            <person name="Minton N.P."/>
            <person name="Titball R.W."/>
            <person name="Pallen M.J."/>
            <person name="Vipond R."/>
        </authorList>
    </citation>
    <scope>NUCLEOTIDE SEQUENCE [LARGE SCALE GENOMIC DNA]</scope>
    <source>
        <strain>FSC 198</strain>
    </source>
</reference>
<feature type="chain" id="PRO_1000054621" description="Large ribosomal subunit protein uL16">
    <location>
        <begin position="1"/>
        <end position="137"/>
    </location>
</feature>
<evidence type="ECO:0000255" key="1">
    <source>
        <dbReference type="HAMAP-Rule" id="MF_01342"/>
    </source>
</evidence>
<evidence type="ECO:0000305" key="2"/>
<organism>
    <name type="scientific">Francisella tularensis subsp. tularensis (strain FSC 198)</name>
    <dbReference type="NCBI Taxonomy" id="393115"/>
    <lineage>
        <taxon>Bacteria</taxon>
        <taxon>Pseudomonadati</taxon>
        <taxon>Pseudomonadota</taxon>
        <taxon>Gammaproteobacteria</taxon>
        <taxon>Thiotrichales</taxon>
        <taxon>Francisellaceae</taxon>
        <taxon>Francisella</taxon>
    </lineage>
</organism>
<protein>
    <recommendedName>
        <fullName evidence="1">Large ribosomal subunit protein uL16</fullName>
    </recommendedName>
    <alternativeName>
        <fullName evidence="2">50S ribosomal protein L16</fullName>
    </alternativeName>
</protein>
<sequence length="137" mass="15684">MLQPKRTKFRKQQKLRNRGLAHRGNKVSFGEFGLQATSRGRITARQIEAGRRAISRHIKRGGKIWIRIFPDKPITQKPLEVRMGKGKGSVEYWVAQIQPGRVLYEITGVKEELAREAFARAAAKMPVQTTFVEKQVM</sequence>
<gene>
    <name evidence="1" type="primary">rplP</name>
    <name type="ordered locus">FTF0332</name>
</gene>
<name>RL16_FRAT1</name>